<sequence length="662" mass="74396">MTKPPLLVTCGLPYTNGPCHLGHLRTYVPADCYVRYMRRTGEEVVFVSGSDNHGTPIVVSAEEQGTTPRALSEQYHRHFDETFRRMGVSFDHFGMTDDPACHHRTQDIVQRLVDNGYVYKQVVNQAYCPKCKRFLPDRYVEGICPYCGKQARGDECDQGCGKHLEPGEIKDPVCKICGTKAEFRNQEHYFLKLSAFRDYLLPFLDNLKGTSNARNYAIGWIKDELHDWCITRTLEWGVKFPGRDDLVVYVWVDAPIGYIAFTEEWAKENGRDWKRYWCKDNRVTHFIGGDIIYHHCIFWPGLLKGAGYGEPYAVVASGMVKVDDHKFSKSRGYVVWTNDDYLDKGLPADCLRYYLLAYTSHTKELNFSWKVFGERINNEVVNILGNFLYRTLFFAHKEFGGVPGGSVDPAILAEIEKCQKSVDDQMQAYEFKGAVDTVMGLAAFGNTYIQTNAPWKLIKTDRAAAAQVIKNGIQIAKALCLLIEPVMPVKAQECWAQLGYIDRVAAHRVDEGVVIVPERQIPAPAPLFARLEEKQIAELDAVLQQRVRDADKKTEKTPMISIEDFSKVEIKTGKVLAAESIPKSSKLLKLQVDIGGETRQIVSGIAAFYKPDELVGKDVIVLTNLAPAKIFGVESNGMILAAGDAASLLTPLKPVEPGTKIR</sequence>
<reference key="1">
    <citation type="journal article" date="2015" name="Microbiology">
        <title>Genome of Methanoregula boonei 6A8 reveals adaptations to oligotrophic peatland environments.</title>
        <authorList>
            <person name="Braeuer S."/>
            <person name="Cadillo-Quiroz H."/>
            <person name="Kyrpides N."/>
            <person name="Woyke T."/>
            <person name="Goodwin L."/>
            <person name="Detter C."/>
            <person name="Podell S."/>
            <person name="Yavitt J.B."/>
            <person name="Zinder S.H."/>
        </authorList>
    </citation>
    <scope>NUCLEOTIDE SEQUENCE [LARGE SCALE GENOMIC DNA]</scope>
    <source>
        <strain>DSM 21154 / JCM 14090 / 6A8</strain>
    </source>
</reference>
<comment type="function">
    <text evidence="1">Is required not only for elongation of protein synthesis but also for the initiation of all mRNA translation through initiator tRNA(fMet) aminoacylation.</text>
</comment>
<comment type="catalytic activity">
    <reaction evidence="1">
        <text>tRNA(Met) + L-methionine + ATP = L-methionyl-tRNA(Met) + AMP + diphosphate</text>
        <dbReference type="Rhea" id="RHEA:13481"/>
        <dbReference type="Rhea" id="RHEA-COMP:9667"/>
        <dbReference type="Rhea" id="RHEA-COMP:9698"/>
        <dbReference type="ChEBI" id="CHEBI:30616"/>
        <dbReference type="ChEBI" id="CHEBI:33019"/>
        <dbReference type="ChEBI" id="CHEBI:57844"/>
        <dbReference type="ChEBI" id="CHEBI:78442"/>
        <dbReference type="ChEBI" id="CHEBI:78530"/>
        <dbReference type="ChEBI" id="CHEBI:456215"/>
        <dbReference type="EC" id="6.1.1.10"/>
    </reaction>
</comment>
<comment type="cofactor">
    <cofactor evidence="1">
        <name>Zn(2+)</name>
        <dbReference type="ChEBI" id="CHEBI:29105"/>
    </cofactor>
    <text evidence="1">Binds 1 zinc ion per subunit.</text>
</comment>
<comment type="subunit">
    <text evidence="1">Homodimer.</text>
</comment>
<comment type="subcellular location">
    <subcellularLocation>
        <location evidence="1">Cytoplasm</location>
    </subcellularLocation>
</comment>
<comment type="similarity">
    <text evidence="1">Belongs to the class-I aminoacyl-tRNA synthetase family. MetG type 1 subfamily.</text>
</comment>
<name>SYM_METB6</name>
<evidence type="ECO:0000255" key="1">
    <source>
        <dbReference type="HAMAP-Rule" id="MF_00098"/>
    </source>
</evidence>
<gene>
    <name evidence="1" type="primary">metG</name>
    <name type="ordered locus">Mboo_0820</name>
</gene>
<feature type="chain" id="PRO_0000331947" description="Methionine--tRNA ligase">
    <location>
        <begin position="1"/>
        <end position="662"/>
    </location>
</feature>
<feature type="domain" description="tRNA-binding" evidence="1">
    <location>
        <begin position="564"/>
        <end position="662"/>
    </location>
</feature>
<feature type="short sequence motif" description="'HIGH' region">
    <location>
        <begin position="13"/>
        <end position="23"/>
    </location>
</feature>
<feature type="short sequence motif" description="'KMSKS' region">
    <location>
        <begin position="326"/>
        <end position="330"/>
    </location>
</feature>
<feature type="binding site" evidence="1">
    <location>
        <position position="144"/>
    </location>
    <ligand>
        <name>Zn(2+)</name>
        <dbReference type="ChEBI" id="CHEBI:29105"/>
    </ligand>
</feature>
<feature type="binding site" evidence="1">
    <location>
        <position position="147"/>
    </location>
    <ligand>
        <name>Zn(2+)</name>
        <dbReference type="ChEBI" id="CHEBI:29105"/>
    </ligand>
</feature>
<feature type="binding site" evidence="1">
    <location>
        <position position="156"/>
    </location>
    <ligand>
        <name>Zn(2+)</name>
        <dbReference type="ChEBI" id="CHEBI:29105"/>
    </ligand>
</feature>
<feature type="binding site" evidence="1">
    <location>
        <position position="160"/>
    </location>
    <ligand>
        <name>Zn(2+)</name>
        <dbReference type="ChEBI" id="CHEBI:29105"/>
    </ligand>
</feature>
<feature type="binding site" evidence="1">
    <location>
        <position position="329"/>
    </location>
    <ligand>
        <name>ATP</name>
        <dbReference type="ChEBI" id="CHEBI:30616"/>
    </ligand>
</feature>
<proteinExistence type="inferred from homology"/>
<accession>A7I6H7</accession>
<protein>
    <recommendedName>
        <fullName evidence="1">Methionine--tRNA ligase</fullName>
        <ecNumber evidence="1">6.1.1.10</ecNumber>
    </recommendedName>
    <alternativeName>
        <fullName evidence="1">Methionyl-tRNA synthetase</fullName>
        <shortName evidence="1">MetRS</shortName>
    </alternativeName>
</protein>
<organism>
    <name type="scientific">Methanoregula boonei (strain DSM 21154 / JCM 14090 / 6A8)</name>
    <dbReference type="NCBI Taxonomy" id="456442"/>
    <lineage>
        <taxon>Archaea</taxon>
        <taxon>Methanobacteriati</taxon>
        <taxon>Methanobacteriota</taxon>
        <taxon>Stenosarchaea group</taxon>
        <taxon>Methanomicrobia</taxon>
        <taxon>Methanomicrobiales</taxon>
        <taxon>Methanoregulaceae</taxon>
        <taxon>Methanoregula</taxon>
    </lineage>
</organism>
<dbReference type="EC" id="6.1.1.10" evidence="1"/>
<dbReference type="EMBL" id="CP000780">
    <property type="protein sequence ID" value="ABS55338.1"/>
    <property type="molecule type" value="Genomic_DNA"/>
</dbReference>
<dbReference type="RefSeq" id="WP_012106362.1">
    <property type="nucleotide sequence ID" value="NC_009712.1"/>
</dbReference>
<dbReference type="SMR" id="A7I6H7"/>
<dbReference type="STRING" id="456442.Mboo_0820"/>
<dbReference type="GeneID" id="5411499"/>
<dbReference type="KEGG" id="mbn:Mboo_0820"/>
<dbReference type="eggNOG" id="arCOG00810">
    <property type="taxonomic scope" value="Archaea"/>
</dbReference>
<dbReference type="HOGENOM" id="CLU_009710_1_2_2"/>
<dbReference type="OrthoDB" id="371856at2157"/>
<dbReference type="Proteomes" id="UP000002408">
    <property type="component" value="Chromosome"/>
</dbReference>
<dbReference type="GO" id="GO:0017101">
    <property type="term" value="C:aminoacyl-tRNA synthetase multienzyme complex"/>
    <property type="evidence" value="ECO:0007669"/>
    <property type="project" value="TreeGrafter"/>
</dbReference>
<dbReference type="GO" id="GO:0005829">
    <property type="term" value="C:cytosol"/>
    <property type="evidence" value="ECO:0007669"/>
    <property type="project" value="TreeGrafter"/>
</dbReference>
<dbReference type="GO" id="GO:0005524">
    <property type="term" value="F:ATP binding"/>
    <property type="evidence" value="ECO:0007669"/>
    <property type="project" value="UniProtKB-UniRule"/>
</dbReference>
<dbReference type="GO" id="GO:0046872">
    <property type="term" value="F:metal ion binding"/>
    <property type="evidence" value="ECO:0007669"/>
    <property type="project" value="UniProtKB-KW"/>
</dbReference>
<dbReference type="GO" id="GO:0004825">
    <property type="term" value="F:methionine-tRNA ligase activity"/>
    <property type="evidence" value="ECO:0007669"/>
    <property type="project" value="UniProtKB-UniRule"/>
</dbReference>
<dbReference type="GO" id="GO:0000049">
    <property type="term" value="F:tRNA binding"/>
    <property type="evidence" value="ECO:0007669"/>
    <property type="project" value="UniProtKB-KW"/>
</dbReference>
<dbReference type="GO" id="GO:0006431">
    <property type="term" value="P:methionyl-tRNA aminoacylation"/>
    <property type="evidence" value="ECO:0007669"/>
    <property type="project" value="UniProtKB-UniRule"/>
</dbReference>
<dbReference type="CDD" id="cd07957">
    <property type="entry name" value="Anticodon_Ia_Met"/>
    <property type="match status" value="1"/>
</dbReference>
<dbReference type="CDD" id="cd00814">
    <property type="entry name" value="MetRS_core"/>
    <property type="match status" value="1"/>
</dbReference>
<dbReference type="CDD" id="cd02800">
    <property type="entry name" value="tRNA_bind_EcMetRS_like"/>
    <property type="match status" value="1"/>
</dbReference>
<dbReference type="FunFam" id="2.20.28.20:FF:000001">
    <property type="entry name" value="Methionine--tRNA ligase"/>
    <property type="match status" value="1"/>
</dbReference>
<dbReference type="FunFam" id="2.40.50.140:FF:000042">
    <property type="entry name" value="Methionine--tRNA ligase"/>
    <property type="match status" value="1"/>
</dbReference>
<dbReference type="Gene3D" id="3.40.50.620">
    <property type="entry name" value="HUPs"/>
    <property type="match status" value="1"/>
</dbReference>
<dbReference type="Gene3D" id="1.10.730.10">
    <property type="entry name" value="Isoleucyl-tRNA Synthetase, Domain 1"/>
    <property type="match status" value="1"/>
</dbReference>
<dbReference type="Gene3D" id="2.20.28.20">
    <property type="entry name" value="Methionyl-tRNA synthetase, Zn-domain"/>
    <property type="match status" value="1"/>
</dbReference>
<dbReference type="Gene3D" id="2.40.50.140">
    <property type="entry name" value="Nucleic acid-binding proteins"/>
    <property type="match status" value="1"/>
</dbReference>
<dbReference type="HAMAP" id="MF_00098">
    <property type="entry name" value="Met_tRNA_synth_type1"/>
    <property type="match status" value="1"/>
</dbReference>
<dbReference type="InterPro" id="IPR041872">
    <property type="entry name" value="Anticodon_Met"/>
</dbReference>
<dbReference type="InterPro" id="IPR004495">
    <property type="entry name" value="Met-tRNA-synth_bsu_C"/>
</dbReference>
<dbReference type="InterPro" id="IPR023458">
    <property type="entry name" value="Met-tRNA_ligase_1"/>
</dbReference>
<dbReference type="InterPro" id="IPR014758">
    <property type="entry name" value="Met-tRNA_synth"/>
</dbReference>
<dbReference type="InterPro" id="IPR015413">
    <property type="entry name" value="Methionyl/Leucyl_tRNA_Synth"/>
</dbReference>
<dbReference type="InterPro" id="IPR033911">
    <property type="entry name" value="MetRS_core"/>
</dbReference>
<dbReference type="InterPro" id="IPR029038">
    <property type="entry name" value="MetRS_Zn"/>
</dbReference>
<dbReference type="InterPro" id="IPR012340">
    <property type="entry name" value="NA-bd_OB-fold"/>
</dbReference>
<dbReference type="InterPro" id="IPR014729">
    <property type="entry name" value="Rossmann-like_a/b/a_fold"/>
</dbReference>
<dbReference type="InterPro" id="IPR002547">
    <property type="entry name" value="tRNA-bd_dom"/>
</dbReference>
<dbReference type="InterPro" id="IPR009080">
    <property type="entry name" value="tRNAsynth_Ia_anticodon-bd"/>
</dbReference>
<dbReference type="NCBIfam" id="TIGR00398">
    <property type="entry name" value="metG"/>
    <property type="match status" value="1"/>
</dbReference>
<dbReference type="NCBIfam" id="TIGR00399">
    <property type="entry name" value="metG_C_term"/>
    <property type="match status" value="1"/>
</dbReference>
<dbReference type="NCBIfam" id="NF001100">
    <property type="entry name" value="PRK00133.1"/>
    <property type="match status" value="1"/>
</dbReference>
<dbReference type="PANTHER" id="PTHR45765">
    <property type="entry name" value="METHIONINE--TRNA LIGASE"/>
    <property type="match status" value="1"/>
</dbReference>
<dbReference type="PANTHER" id="PTHR45765:SF1">
    <property type="entry name" value="METHIONINE--TRNA LIGASE, CYTOPLASMIC"/>
    <property type="match status" value="1"/>
</dbReference>
<dbReference type="Pfam" id="PF19303">
    <property type="entry name" value="Anticodon_3"/>
    <property type="match status" value="1"/>
</dbReference>
<dbReference type="Pfam" id="PF09334">
    <property type="entry name" value="tRNA-synt_1g"/>
    <property type="match status" value="1"/>
</dbReference>
<dbReference type="Pfam" id="PF01588">
    <property type="entry name" value="tRNA_bind"/>
    <property type="match status" value="1"/>
</dbReference>
<dbReference type="PRINTS" id="PR01041">
    <property type="entry name" value="TRNASYNTHMET"/>
</dbReference>
<dbReference type="SUPFAM" id="SSF47323">
    <property type="entry name" value="Anticodon-binding domain of a subclass of class I aminoacyl-tRNA synthetases"/>
    <property type="match status" value="1"/>
</dbReference>
<dbReference type="SUPFAM" id="SSF57770">
    <property type="entry name" value="Methionyl-tRNA synthetase (MetRS), Zn-domain"/>
    <property type="match status" value="1"/>
</dbReference>
<dbReference type="SUPFAM" id="SSF50249">
    <property type="entry name" value="Nucleic acid-binding proteins"/>
    <property type="match status" value="1"/>
</dbReference>
<dbReference type="SUPFAM" id="SSF52374">
    <property type="entry name" value="Nucleotidylyl transferase"/>
    <property type="match status" value="1"/>
</dbReference>
<dbReference type="PROSITE" id="PS50886">
    <property type="entry name" value="TRBD"/>
    <property type="match status" value="1"/>
</dbReference>
<keyword id="KW-0030">Aminoacyl-tRNA synthetase</keyword>
<keyword id="KW-0067">ATP-binding</keyword>
<keyword id="KW-0963">Cytoplasm</keyword>
<keyword id="KW-0436">Ligase</keyword>
<keyword id="KW-0479">Metal-binding</keyword>
<keyword id="KW-0547">Nucleotide-binding</keyword>
<keyword id="KW-0648">Protein biosynthesis</keyword>
<keyword id="KW-1185">Reference proteome</keyword>
<keyword id="KW-0694">RNA-binding</keyword>
<keyword id="KW-0820">tRNA-binding</keyword>
<keyword id="KW-0862">Zinc</keyword>